<name>ZO3_CANLF</name>
<keyword id="KW-0965">Cell junction</keyword>
<keyword id="KW-1003">Cell membrane</keyword>
<keyword id="KW-0903">Direct protein sequencing</keyword>
<keyword id="KW-0472">Membrane</keyword>
<keyword id="KW-0539">Nucleus</keyword>
<keyword id="KW-0597">Phosphoprotein</keyword>
<keyword id="KW-1185">Reference proteome</keyword>
<keyword id="KW-0677">Repeat</keyword>
<keyword id="KW-0728">SH3 domain</keyword>
<keyword id="KW-0796">Tight junction</keyword>
<proteinExistence type="evidence at protein level"/>
<sequence length="898" mass="98415">MEELTIWEQHTATLCRDPRRGFGIAISGGRDRASGSVVVSDVVPGGPADGRLQTGDHVVMVNGVSMESVTSTFAIQILKTCTKLANITVKRPRKIQLPATKAGTSGRGRQGLEEEADCGQGYDGDTSSGSGRSWDKRSRRARTGRRNQAGSRGRRSPGGNSEANGLALVSGFKRLPRQDVHMRPVKSVLVRRTESEEFGVTLGSQIFIKHITDSGLAARNRGLQEGDLILQINGVSSENLSLSDTRRLIEKSEGKLTLLVLRDRGQFLVNIPPAVSDSDSDSSFLDDISALGSELSQAVPSHVPPPPPHAQRSLDSDGTDSPRDSPPLRRENSLDSRTISEPDAPRHSSYDIYRVPSSQSAEDRGYSPDSRVVRFHKGTTIGLRLAGGNDVGIFVSGVQEGSPADGQGIQEGDQILQVNDVPFRNLTREEAVQFLVALPPGEEVELVTQRNEDIFRKMVQSRVGDSFYIRTHFELEASPPSGLGFTRGDVFHVLDTLCPGPGPSGARGTHWLAVRMGRDLREQERGIIPNQSRAEQLASLESAQRAVGAGPGASVGSSARAEFWRLRGLRRGAKKSTQRSREDLSALTRQGHYPPYERVVLREASFKRPVVILGPVADIAMQKLTAEMPDQFGIADSVLRTDSPSKIIKLDTVRVIAEKNKHALLDVTPSAVERLNYVQYYPIVVFCAPESRAALKALRQWLAPASRRSARRLYAQAQKLRKHSEHLFTATIPLRGTSDTWYQELKAVVREQQTRPIWTAEDQLDNSSEDNLELPHRGLADSSADLSCDSRVNSDYETDGEGYTDGEGYTDVDEGPPAPALARSSEPVLEEEPRSPRDHGRASGARGAQVDRHPYHSQGRQDSMRTYGQEALKKKFTRARDVESSDEDGYDWGPATDL</sequence>
<accession>O62683</accession>
<feature type="chain" id="PRO_0000094545" description="Tight junction protein ZO-3">
    <location>
        <begin position="1"/>
        <end position="898"/>
    </location>
</feature>
<feature type="domain" description="PDZ 1" evidence="4">
    <location>
        <begin position="11"/>
        <end position="93"/>
    </location>
</feature>
<feature type="domain" description="PDZ 2" evidence="4">
    <location>
        <begin position="187"/>
        <end position="264"/>
    </location>
</feature>
<feature type="domain" description="PDZ 3" evidence="4">
    <location>
        <begin position="369"/>
        <end position="435"/>
    </location>
</feature>
<feature type="domain" description="SH3" evidence="5">
    <location>
        <begin position="464"/>
        <end position="538"/>
    </location>
</feature>
<feature type="domain" description="Guanylate kinase-like" evidence="3">
    <location>
        <begin position="569"/>
        <end position="750"/>
    </location>
</feature>
<feature type="region of interest" description="Disordered" evidence="6">
    <location>
        <begin position="98"/>
        <end position="165"/>
    </location>
</feature>
<feature type="region of interest" description="Disordered" evidence="6">
    <location>
        <begin position="295"/>
        <end position="368"/>
    </location>
</feature>
<feature type="region of interest" description="Disordered" evidence="6">
    <location>
        <begin position="759"/>
        <end position="898"/>
    </location>
</feature>
<feature type="compositionally biased region" description="Basic and acidic residues" evidence="6">
    <location>
        <begin position="312"/>
        <end position="349"/>
    </location>
</feature>
<feature type="compositionally biased region" description="Acidic residues" evidence="6">
    <location>
        <begin position="762"/>
        <end position="772"/>
    </location>
</feature>
<feature type="compositionally biased region" description="Low complexity" evidence="6">
    <location>
        <begin position="780"/>
        <end position="790"/>
    </location>
</feature>
<feature type="compositionally biased region" description="Acidic residues" evidence="6">
    <location>
        <begin position="796"/>
        <end position="814"/>
    </location>
</feature>
<feature type="compositionally biased region" description="Basic and acidic residues" evidence="6">
    <location>
        <begin position="831"/>
        <end position="841"/>
    </location>
</feature>
<feature type="modified residue" description="Phosphoserine" evidence="1">
    <location>
        <position position="128"/>
    </location>
</feature>
<feature type="modified residue" description="Phosphoserine" evidence="1">
    <location>
        <position position="156"/>
    </location>
</feature>
<feature type="modified residue" description="Phosphoserine" evidence="2">
    <location>
        <position position="161"/>
    </location>
</feature>
<feature type="modified residue" description="Phosphoserine" evidence="1">
    <location>
        <position position="195"/>
    </location>
</feature>
<feature type="modified residue" description="Phosphoserine" evidence="1">
    <location>
        <position position="313"/>
    </location>
</feature>
<feature type="modified residue" description="Phosphothreonine" evidence="1">
    <location>
        <position position="319"/>
    </location>
</feature>
<feature type="modified residue" description="Phosphoserine" evidence="1">
    <location>
        <position position="321"/>
    </location>
</feature>
<feature type="modified residue" description="Phosphoserine" evidence="1">
    <location>
        <position position="360"/>
    </location>
</feature>
<feature type="modified residue" description="Phosphoserine" evidence="1">
    <location>
        <position position="580"/>
    </location>
</feature>
<feature type="modified residue" description="Phosphoserine" evidence="1">
    <location>
        <position position="835"/>
    </location>
</feature>
<feature type="modified residue" description="Phosphoserine" evidence="1">
    <location>
        <position position="884"/>
    </location>
</feature>
<feature type="modified residue" description="Phosphoserine" evidence="1">
    <location>
        <position position="885"/>
    </location>
</feature>
<protein>
    <recommendedName>
        <fullName>Tight junction protein ZO-3</fullName>
    </recommendedName>
    <alternativeName>
        <fullName>Tight junction protein 3</fullName>
    </alternativeName>
    <alternativeName>
        <fullName>Zona occludens protein 3</fullName>
    </alternativeName>
    <alternativeName>
        <fullName>Zonula occludens protein 3</fullName>
    </alternativeName>
</protein>
<evidence type="ECO:0000250" key="1">
    <source>
        <dbReference type="UniProtKB" id="O95049"/>
    </source>
</evidence>
<evidence type="ECO:0000250" key="2">
    <source>
        <dbReference type="UniProtKB" id="Q9QXY1"/>
    </source>
</evidence>
<evidence type="ECO:0000255" key="3">
    <source>
        <dbReference type="PROSITE-ProRule" id="PRU00100"/>
    </source>
</evidence>
<evidence type="ECO:0000255" key="4">
    <source>
        <dbReference type="PROSITE-ProRule" id="PRU00143"/>
    </source>
</evidence>
<evidence type="ECO:0000255" key="5">
    <source>
        <dbReference type="PROSITE-ProRule" id="PRU00192"/>
    </source>
</evidence>
<evidence type="ECO:0000256" key="6">
    <source>
        <dbReference type="SAM" id="MobiDB-lite"/>
    </source>
</evidence>
<evidence type="ECO:0000269" key="7">
    <source>
    </source>
</evidence>
<evidence type="ECO:0000269" key="8">
    <source>
    </source>
</evidence>
<evidence type="ECO:0000269" key="9">
    <source>
    </source>
</evidence>
<evidence type="ECO:0000269" key="10">
    <source>
    </source>
</evidence>
<evidence type="ECO:0000269" key="11">
    <source>
    </source>
</evidence>
<evidence type="ECO:0000269" key="12">
    <source>
    </source>
</evidence>
<evidence type="ECO:0000305" key="13"/>
<dbReference type="EMBL" id="AF023617">
    <property type="protein sequence ID" value="AAC39177.1"/>
    <property type="molecule type" value="mRNA"/>
</dbReference>
<dbReference type="RefSeq" id="NP_001003202.1">
    <property type="nucleotide sequence ID" value="NM_001003202.1"/>
</dbReference>
<dbReference type="SMR" id="O62683"/>
<dbReference type="FunCoup" id="O62683">
    <property type="interactions" value="95"/>
</dbReference>
<dbReference type="IntAct" id="O62683">
    <property type="interactions" value="1"/>
</dbReference>
<dbReference type="MINT" id="O62683"/>
<dbReference type="STRING" id="9615.ENSCAFP00000028316"/>
<dbReference type="PaxDb" id="9612-ENSCAFP00000028316"/>
<dbReference type="eggNOG" id="KOG3580">
    <property type="taxonomic scope" value="Eukaryota"/>
</dbReference>
<dbReference type="InParanoid" id="O62683"/>
<dbReference type="OrthoDB" id="418634at2759"/>
<dbReference type="Proteomes" id="UP000002254">
    <property type="component" value="Unplaced"/>
</dbReference>
<dbReference type="Proteomes" id="UP000694429">
    <property type="component" value="Unplaced"/>
</dbReference>
<dbReference type="Proteomes" id="UP000694542">
    <property type="component" value="Unplaced"/>
</dbReference>
<dbReference type="Proteomes" id="UP000805418">
    <property type="component" value="Unplaced"/>
</dbReference>
<dbReference type="GO" id="GO:0005923">
    <property type="term" value="C:bicellular tight junction"/>
    <property type="evidence" value="ECO:0000318"/>
    <property type="project" value="GO_Central"/>
</dbReference>
<dbReference type="GO" id="GO:0009986">
    <property type="term" value="C:cell surface"/>
    <property type="evidence" value="ECO:0000314"/>
    <property type="project" value="MGI"/>
</dbReference>
<dbReference type="GO" id="GO:0005634">
    <property type="term" value="C:nucleus"/>
    <property type="evidence" value="ECO:0007669"/>
    <property type="project" value="UniProtKB-SubCell"/>
</dbReference>
<dbReference type="GO" id="GO:0005886">
    <property type="term" value="C:plasma membrane"/>
    <property type="evidence" value="ECO:0000318"/>
    <property type="project" value="GO_Central"/>
</dbReference>
<dbReference type="GO" id="GO:0070160">
    <property type="term" value="C:tight junction"/>
    <property type="evidence" value="ECO:0000314"/>
    <property type="project" value="ARUK-UCL"/>
</dbReference>
<dbReference type="GO" id="GO:0050839">
    <property type="term" value="F:cell adhesion molecule binding"/>
    <property type="evidence" value="ECO:0000318"/>
    <property type="project" value="GO_Central"/>
</dbReference>
<dbReference type="GO" id="GO:0098609">
    <property type="term" value="P:cell-cell adhesion"/>
    <property type="evidence" value="ECO:0000318"/>
    <property type="project" value="GO_Central"/>
</dbReference>
<dbReference type="GO" id="GO:0045216">
    <property type="term" value="P:cell-cell junction organization"/>
    <property type="evidence" value="ECO:0000318"/>
    <property type="project" value="GO_Central"/>
</dbReference>
<dbReference type="GO" id="GO:0090557">
    <property type="term" value="P:establishment of endothelial intestinal barrier"/>
    <property type="evidence" value="ECO:0000318"/>
    <property type="project" value="GO_Central"/>
</dbReference>
<dbReference type="GO" id="GO:1905605">
    <property type="term" value="P:positive regulation of blood-brain barrier permeability"/>
    <property type="evidence" value="ECO:0000318"/>
    <property type="project" value="GO_Central"/>
</dbReference>
<dbReference type="GO" id="GO:0150105">
    <property type="term" value="P:protein localization to cell-cell junction"/>
    <property type="evidence" value="ECO:0000318"/>
    <property type="project" value="GO_Central"/>
</dbReference>
<dbReference type="CDD" id="cd06727">
    <property type="entry name" value="PDZ1_ZO1-like"/>
    <property type="match status" value="1"/>
</dbReference>
<dbReference type="CDD" id="cd06728">
    <property type="entry name" value="PDZ2_ZO1-like_ds"/>
    <property type="match status" value="1"/>
</dbReference>
<dbReference type="CDD" id="cd06729">
    <property type="entry name" value="PDZ3_ZO1-like_domain"/>
    <property type="match status" value="1"/>
</dbReference>
<dbReference type="FunFam" id="2.30.42.10:FF:000009">
    <property type="entry name" value="Putative tight junction protein ZO-1"/>
    <property type="match status" value="1"/>
</dbReference>
<dbReference type="FunFam" id="2.30.42.10:FF:000013">
    <property type="entry name" value="Putative tight junction protein ZO-1"/>
    <property type="match status" value="1"/>
</dbReference>
<dbReference type="FunFam" id="3.40.50.300:FF:000110">
    <property type="entry name" value="tight junction protein ZO-1 isoform X1"/>
    <property type="match status" value="1"/>
</dbReference>
<dbReference type="FunFam" id="2.30.42.10:FF:000075">
    <property type="entry name" value="Tight junction protein ZO-2 isoform 2"/>
    <property type="match status" value="1"/>
</dbReference>
<dbReference type="Gene3D" id="2.30.42.10">
    <property type="match status" value="3"/>
</dbReference>
<dbReference type="Gene3D" id="3.40.50.300">
    <property type="entry name" value="P-loop containing nucleotide triphosphate hydrolases"/>
    <property type="match status" value="1"/>
</dbReference>
<dbReference type="Gene3D" id="2.30.30.40">
    <property type="entry name" value="SH3 Domains"/>
    <property type="match status" value="1"/>
</dbReference>
<dbReference type="InterPro" id="IPR008145">
    <property type="entry name" value="GK/Ca_channel_bsu"/>
</dbReference>
<dbReference type="InterPro" id="IPR008144">
    <property type="entry name" value="Guanylate_kin-like_dom"/>
</dbReference>
<dbReference type="InterPro" id="IPR027417">
    <property type="entry name" value="P-loop_NTPase"/>
</dbReference>
<dbReference type="InterPro" id="IPR001478">
    <property type="entry name" value="PDZ"/>
</dbReference>
<dbReference type="InterPro" id="IPR036034">
    <property type="entry name" value="PDZ_sf"/>
</dbReference>
<dbReference type="InterPro" id="IPR036028">
    <property type="entry name" value="SH3-like_dom_sf"/>
</dbReference>
<dbReference type="InterPro" id="IPR001452">
    <property type="entry name" value="SH3_domain"/>
</dbReference>
<dbReference type="InterPro" id="IPR005417">
    <property type="entry name" value="ZO"/>
</dbReference>
<dbReference type="InterPro" id="IPR005420">
    <property type="entry name" value="ZO-3"/>
</dbReference>
<dbReference type="PANTHER" id="PTHR13865">
    <property type="entry name" value="TIGHT JUNCTION PROTEIN"/>
    <property type="match status" value="1"/>
</dbReference>
<dbReference type="PANTHER" id="PTHR13865:SF11">
    <property type="entry name" value="TIGHT JUNCTION PROTEIN ZO-3"/>
    <property type="match status" value="1"/>
</dbReference>
<dbReference type="Pfam" id="PF00625">
    <property type="entry name" value="Guanylate_kin"/>
    <property type="match status" value="1"/>
</dbReference>
<dbReference type="Pfam" id="PF00595">
    <property type="entry name" value="PDZ"/>
    <property type="match status" value="3"/>
</dbReference>
<dbReference type="Pfam" id="PF07653">
    <property type="entry name" value="SH3_2"/>
    <property type="match status" value="1"/>
</dbReference>
<dbReference type="PRINTS" id="PR01597">
    <property type="entry name" value="ZONOCCLUDNS"/>
</dbReference>
<dbReference type="PRINTS" id="PR01600">
    <property type="entry name" value="ZONOCCLUDNS3"/>
</dbReference>
<dbReference type="SMART" id="SM00072">
    <property type="entry name" value="GuKc"/>
    <property type="match status" value="1"/>
</dbReference>
<dbReference type="SMART" id="SM00228">
    <property type="entry name" value="PDZ"/>
    <property type="match status" value="3"/>
</dbReference>
<dbReference type="SUPFAM" id="SSF52540">
    <property type="entry name" value="P-loop containing nucleoside triphosphate hydrolases"/>
    <property type="match status" value="1"/>
</dbReference>
<dbReference type="SUPFAM" id="SSF50156">
    <property type="entry name" value="PDZ domain-like"/>
    <property type="match status" value="3"/>
</dbReference>
<dbReference type="SUPFAM" id="SSF50044">
    <property type="entry name" value="SH3-domain"/>
    <property type="match status" value="1"/>
</dbReference>
<dbReference type="PROSITE" id="PS50052">
    <property type="entry name" value="GUANYLATE_KINASE_2"/>
    <property type="match status" value="1"/>
</dbReference>
<dbReference type="PROSITE" id="PS50106">
    <property type="entry name" value="PDZ"/>
    <property type="match status" value="3"/>
</dbReference>
<dbReference type="PROSITE" id="PS50002">
    <property type="entry name" value="SH3"/>
    <property type="match status" value="1"/>
</dbReference>
<reference key="1">
    <citation type="journal article" date="1998" name="J. Cell Biol.">
        <title>ZO-3, a novel member of the MAGUK protein family found at the tight junction, interacts with ZO-1 and occludin.</title>
        <authorList>
            <person name="Haskins J."/>
            <person name="Gu L."/>
            <person name="Wittchen E.S."/>
            <person name="Hibbard J."/>
            <person name="Stevenson B.R."/>
        </authorList>
    </citation>
    <scope>NUCLEOTIDE SEQUENCE [MRNA]</scope>
    <scope>PARTIAL PROTEIN SEQUENCE</scope>
    <scope>INTERACTION WITH TJP1 AND OCLN</scope>
    <scope>SUBCELLULAR LOCATION</scope>
    <source>
        <strain>Cocker spaniel</strain>
        <tissue>Kidney</tissue>
    </source>
</reference>
<reference key="2">
    <citation type="journal article" date="1993" name="J. Cell Biol.">
        <title>Assembly of the tight junction: the role of diacylglycerol.</title>
        <authorList>
            <person name="Balda M.S."/>
            <person name="Gonzalez-Mariscal L."/>
            <person name="Matter K."/>
            <person name="Cereijido M."/>
            <person name="Anderson J.M."/>
        </authorList>
    </citation>
    <scope>INTERACTION WITH TJP1</scope>
    <scope>PHOSPHORYLATION</scope>
</reference>
<reference key="3">
    <citation type="journal article" date="1999" name="J. Biol. Chem.">
        <title>Protein interactions at the tight junction. Actin has multiple binding partners, and ZO-1 forms independent complexes with ZO-2 and ZO-3.</title>
        <authorList>
            <person name="Wittchen E.S."/>
            <person name="Haskins J."/>
            <person name="Stevenson B.R."/>
        </authorList>
    </citation>
    <scope>INTERACTION WITH TJP1</scope>
</reference>
<reference key="4">
    <citation type="journal article" date="2002" name="J. Biol. Chem.">
        <title>The carboxyl terminus of zona occludens-3 binds and recruits a mammalian homologue of discs lost to tight junctions.</title>
        <authorList>
            <person name="Roh M.H."/>
            <person name="Liu C.-J."/>
            <person name="Laurinec S."/>
            <person name="Margolis B."/>
        </authorList>
    </citation>
    <scope>FUNCTION</scope>
    <scope>SUBCELLULAR LOCATION</scope>
    <scope>INTERACTION WITH PATJ</scope>
</reference>
<reference key="5">
    <citation type="journal article" date="2008" name="Mol. Biol. Cell">
        <title>Paracingulin regulates the activity of Rac1 and RhoA GTPases by recruiting Tiam1 and GEF-H1 to epithelial junctions.</title>
        <authorList>
            <person name="Guillemot L."/>
            <person name="Paschoud S."/>
            <person name="Jond L."/>
            <person name="Foglia A."/>
            <person name="Citi S."/>
        </authorList>
    </citation>
    <scope>INDUCTION</scope>
</reference>
<reference key="6">
    <citation type="journal article" date="2014" name="J. Biol. Chem.">
        <title>ZO proteins redundantly regulate the transcription factor DbpA/ZONAB.</title>
        <authorList>
            <person name="Spadaro D."/>
            <person name="Tapia R."/>
            <person name="Jond L."/>
            <person name="Sudol M."/>
            <person name="Fanning A.S."/>
            <person name="Citi S."/>
        </authorList>
    </citation>
    <scope>FUNCTION</scope>
</reference>
<comment type="function">
    <text evidence="1 2 8 10">TJP1, TJP2, and TJP3 are closely related scaffolding proteins that link tight junction (TJ) transmembrane proteins such as claudins, junctional adhesion molecules, and occludin to the actin cytoskeleton (PubMed:12021270). The tight junction acts to limit movement of substances through the paracellular space and as a boundary between the compositionally distinct apical and basolateral plasma membrane domains of epithelial and endothelial cells. Binds and recruits PATJ to tight junctions where it connects and stabilizes apical and lateral components of tight junctions (PubMed:12021270). Promotes cell-cycle progression through the sequestration of cyclin D1 (CCND1) at tight junctions during mitosis which prevents CCND1 degradation during M-phase and enables S-phase transition (By similarity). With TJP1 and TJP2, participates in the junctional retention and stability of the transcription factor DBPA, but is not involved in its shuttling to the nucleus (PubMed:24986862). Contrary to TJP2, TJP3 is dispensable for individual viability, embryonic development, epithelial differentiation, and the establishment of TJs, at least in the laboratory environment (By similarity).</text>
</comment>
<comment type="subunit">
    <text evidence="1 2 7 8 11 12">Heterodimer with TJP1 (PubMed:10575001, PubMed:8408213, PubMed:9531559). Interacts with UBN1 (By similarity). Interacts with occludin OCLN and claudins (PubMed:8408213, PubMed:9531559). Interacts with PATJ (PubMed:12021270). Interacts with FASLG (By similarity). Interacts with CCND1 (By similarity).</text>
</comment>
<comment type="subcellular location">
    <subcellularLocation>
        <location evidence="8">Cell membrane</location>
        <topology evidence="8">Peripheral membrane protein</topology>
        <orientation evidence="8">Cytoplasmic side</orientation>
    </subcellularLocation>
    <subcellularLocation>
        <location evidence="8 12">Cell junction</location>
        <location evidence="8 12">Tight junction</location>
    </subcellularLocation>
    <subcellularLocation>
        <location evidence="1">Nucleus</location>
    </subcellularLocation>
    <text evidence="1 2">Exhibits predominant nuclear expression in proliferating cells but is exclusively junctionally expressed after confluence is reached (By similarity). Shows an epithelial-specific tight junction localization in a TJP1/TJP2-dependent fashion (By similarity).</text>
</comment>
<comment type="induction">
    <text evidence="9">Expression is up-regulated by the depletion of the junctional protein paracingulin CGNL1 (PubMed:18653465).</text>
</comment>
<comment type="PTM">
    <text evidence="11">Phosphorylated (PubMed:8408213).</text>
</comment>
<comment type="similarity">
    <text evidence="13">Belongs to the MAGUK family.</text>
</comment>
<gene>
    <name type="primary">TJP3</name>
    <name type="synonym">ZO3</name>
</gene>
<organism>
    <name type="scientific">Canis lupus familiaris</name>
    <name type="common">Dog</name>
    <name type="synonym">Canis familiaris</name>
    <dbReference type="NCBI Taxonomy" id="9615"/>
    <lineage>
        <taxon>Eukaryota</taxon>
        <taxon>Metazoa</taxon>
        <taxon>Chordata</taxon>
        <taxon>Craniata</taxon>
        <taxon>Vertebrata</taxon>
        <taxon>Euteleostomi</taxon>
        <taxon>Mammalia</taxon>
        <taxon>Eutheria</taxon>
        <taxon>Laurasiatheria</taxon>
        <taxon>Carnivora</taxon>
        <taxon>Caniformia</taxon>
        <taxon>Canidae</taxon>
        <taxon>Canis</taxon>
    </lineage>
</organism>